<sequence>MGMRSAARMPKLTRRSRILIMIALGVIVLLLAGPRLIDAYVDWLWFGELGYRSVFTTMLATRIVVCLVAGVVVGGIVFGGLALAYRTRPVFVPDADNDPVARYRAVVLARLRLVGIGIPAAIGLLAGIVAQSYWARIQLFLHGGDFGVRDPQFGRDLGFYAFELPFYRLMLSYMLVSVFLAFVANLVAHYIFGGIRLSGRTGALSRSARVQLVSLVGVLVLLKAVAYWLDRYELLSHTRGGKPFTGAGYTDINAVLPAKLILMAIALICAAAVFSAIALRDLRIPAIGLVLLLLSSLIVGAGWPLIVEQISVKPNAAQKESEYISRSITATRQAYGLTSDVVTYRNYSGDSPATAQQVAADRATTSNIRLLDPTIVSPAFTQFQQGKNFYYFPDQLSIDRYLDRNGNLRDYVVAARELNPDRLIDNQRDWINRHTVYTHGNGFIASPANTVRGIANDPNQNGGYPEFLVNVVGANGTVVSDGPAPLDQPRIYFGPVISNTSADYAIVGRNGDDREYDYETNIDTKRYTYTGSGGVPLGGWLARSVFAAKFAERNFLFSNVIGSNSKILFNRDPAQRVEAVAPWLTTDSAVYPAIVNKRLVWIVDGYTTLDNYPYSELTSLSSATADSNEVAFNRLVPDKKVSYIRNSVKATVDAYDGTVTLYQQDEKDPVLKAWMQVFPGTVKPKSDIAPELAEHLRYPEDLFKVQRMLLAKYHVNDPVTFFSTSDFWDVPLDPNPTASSYQPPYYIVAKNIAKDDNSASYQLISAMNRFKRDYLAAYISASSDPATYGNLTVLTIPGQVNGPKLANNAITTDPAVSQDLGVIGRDNQNRIRWGNLLTLPVARGGLLYVEPVYASPGASDAASSYPRLIRVAMMYNDKVGYGPTVRDALTGLFGPGAGATATGIAPTEAAVPPSPAANPPPPASGPQPPPVTAAPPVPVGAVTLSPAKVAALQEIQAAIGAARDAQKKGDFAAYGSALQRLDEAITKFNDAG</sequence>
<evidence type="ECO:0000255" key="1">
    <source>
        <dbReference type="HAMAP-Rule" id="MF_01600"/>
    </source>
</evidence>
<evidence type="ECO:0000256" key="2">
    <source>
        <dbReference type="SAM" id="MobiDB-lite"/>
    </source>
</evidence>
<organism>
    <name type="scientific">Mycobacterium tuberculosis (strain CDC 1551 / Oshkosh)</name>
    <dbReference type="NCBI Taxonomy" id="83331"/>
    <lineage>
        <taxon>Bacteria</taxon>
        <taxon>Bacillati</taxon>
        <taxon>Actinomycetota</taxon>
        <taxon>Actinomycetes</taxon>
        <taxon>Mycobacteriales</taxon>
        <taxon>Mycobacteriaceae</taxon>
        <taxon>Mycobacterium</taxon>
        <taxon>Mycobacterium tuberculosis complex</taxon>
    </lineage>
</organism>
<name>Y3193_MYCTO</name>
<accession>P9WFL2</accession>
<accession>L0TEL2</accession>
<accession>O53339</accession>
<feature type="chain" id="PRO_0000428519" description="UPF0182 protein MT3285">
    <location>
        <begin position="1"/>
        <end position="992"/>
    </location>
</feature>
<feature type="transmembrane region" description="Helical" evidence="1">
    <location>
        <begin position="17"/>
        <end position="39"/>
    </location>
</feature>
<feature type="transmembrane region" description="Helical" evidence="1">
    <location>
        <begin position="59"/>
        <end position="81"/>
    </location>
</feature>
<feature type="transmembrane region" description="Helical" evidence="1">
    <location>
        <begin position="113"/>
        <end position="135"/>
    </location>
</feature>
<feature type="transmembrane region" description="Helical" evidence="1">
    <location>
        <begin position="169"/>
        <end position="191"/>
    </location>
</feature>
<feature type="transmembrane region" description="Helical" evidence="1">
    <location>
        <begin position="212"/>
        <end position="229"/>
    </location>
</feature>
<feature type="transmembrane region" description="Helical" evidence="1">
    <location>
        <begin position="255"/>
        <end position="277"/>
    </location>
</feature>
<feature type="transmembrane region" description="Helical" evidence="1">
    <location>
        <begin position="284"/>
        <end position="306"/>
    </location>
</feature>
<feature type="region of interest" description="Disordered" evidence="2">
    <location>
        <begin position="906"/>
        <end position="938"/>
    </location>
</feature>
<feature type="compositionally biased region" description="Pro residues" evidence="2">
    <location>
        <begin position="912"/>
        <end position="938"/>
    </location>
</feature>
<proteinExistence type="inferred from homology"/>
<comment type="subcellular location">
    <subcellularLocation>
        <location evidence="1">Cell membrane</location>
        <topology evidence="1">Multi-pass membrane protein</topology>
    </subcellularLocation>
</comment>
<comment type="similarity">
    <text evidence="1">Belongs to the UPF0182 family.</text>
</comment>
<dbReference type="EMBL" id="AE000516">
    <property type="protein sequence ID" value="AAK47626.1"/>
    <property type="molecule type" value="Genomic_DNA"/>
</dbReference>
<dbReference type="PIR" id="G70950">
    <property type="entry name" value="G70950"/>
</dbReference>
<dbReference type="RefSeq" id="WP_003899961.1">
    <property type="nucleotide sequence ID" value="NZ_KK341227.1"/>
</dbReference>
<dbReference type="SMR" id="P9WFL2"/>
<dbReference type="KEGG" id="mtc:MT3285"/>
<dbReference type="PATRIC" id="fig|83331.31.peg.3536"/>
<dbReference type="HOGENOM" id="CLU_007733_1_0_11"/>
<dbReference type="Proteomes" id="UP000001020">
    <property type="component" value="Chromosome"/>
</dbReference>
<dbReference type="GO" id="GO:0005576">
    <property type="term" value="C:extracellular region"/>
    <property type="evidence" value="ECO:0007669"/>
    <property type="project" value="TreeGrafter"/>
</dbReference>
<dbReference type="GO" id="GO:0005886">
    <property type="term" value="C:plasma membrane"/>
    <property type="evidence" value="ECO:0007669"/>
    <property type="project" value="UniProtKB-SubCell"/>
</dbReference>
<dbReference type="HAMAP" id="MF_01600">
    <property type="entry name" value="UPF0182"/>
    <property type="match status" value="1"/>
</dbReference>
<dbReference type="InterPro" id="IPR005372">
    <property type="entry name" value="UPF0182"/>
</dbReference>
<dbReference type="NCBIfam" id="NF000825">
    <property type="entry name" value="PRK00068.1"/>
    <property type="match status" value="1"/>
</dbReference>
<dbReference type="NCBIfam" id="NF009097">
    <property type="entry name" value="PRK12438.1"/>
    <property type="match status" value="1"/>
</dbReference>
<dbReference type="PANTHER" id="PTHR39344">
    <property type="entry name" value="UPF0182 PROTEIN SLL1060"/>
    <property type="match status" value="1"/>
</dbReference>
<dbReference type="PANTHER" id="PTHR39344:SF1">
    <property type="entry name" value="UPF0182 PROTEIN SLL1060"/>
    <property type="match status" value="1"/>
</dbReference>
<dbReference type="Pfam" id="PF03699">
    <property type="entry name" value="UPF0182"/>
    <property type="match status" value="1"/>
</dbReference>
<protein>
    <recommendedName>
        <fullName evidence="1">UPF0182 protein MT3285</fullName>
    </recommendedName>
</protein>
<keyword id="KW-1003">Cell membrane</keyword>
<keyword id="KW-0472">Membrane</keyword>
<keyword id="KW-1185">Reference proteome</keyword>
<keyword id="KW-0812">Transmembrane</keyword>
<keyword id="KW-1133">Transmembrane helix</keyword>
<reference key="1">
    <citation type="journal article" date="2002" name="J. Bacteriol.">
        <title>Whole-genome comparison of Mycobacterium tuberculosis clinical and laboratory strains.</title>
        <authorList>
            <person name="Fleischmann R.D."/>
            <person name="Alland D."/>
            <person name="Eisen J.A."/>
            <person name="Carpenter L."/>
            <person name="White O."/>
            <person name="Peterson J.D."/>
            <person name="DeBoy R.T."/>
            <person name="Dodson R.J."/>
            <person name="Gwinn M.L."/>
            <person name="Haft D.H."/>
            <person name="Hickey E.K."/>
            <person name="Kolonay J.F."/>
            <person name="Nelson W.C."/>
            <person name="Umayam L.A."/>
            <person name="Ermolaeva M.D."/>
            <person name="Salzberg S.L."/>
            <person name="Delcher A."/>
            <person name="Utterback T.R."/>
            <person name="Weidman J.F."/>
            <person name="Khouri H.M."/>
            <person name="Gill J."/>
            <person name="Mikula A."/>
            <person name="Bishai W."/>
            <person name="Jacobs W.R. Jr."/>
            <person name="Venter J.C."/>
            <person name="Fraser C.M."/>
        </authorList>
    </citation>
    <scope>NUCLEOTIDE SEQUENCE [LARGE SCALE GENOMIC DNA]</scope>
    <source>
        <strain>CDC 1551 / Oshkosh</strain>
    </source>
</reference>
<gene>
    <name type="ordered locus">MT3285</name>
</gene>